<keyword id="KW-0963">Cytoplasm</keyword>
<keyword id="KW-0489">Methyltransferase</keyword>
<keyword id="KW-1185">Reference proteome</keyword>
<keyword id="KW-0949">S-adenosyl-L-methionine</keyword>
<keyword id="KW-0808">Transferase</keyword>
<keyword id="KW-0819">tRNA processing</keyword>
<evidence type="ECO:0000255" key="1">
    <source>
        <dbReference type="HAMAP-Rule" id="MF_00605"/>
    </source>
</evidence>
<sequence length="259" mass="28587">MRFDVITLFPELFGPFLVSGVTRRAYETGLVEVKLWNPRDFAEGSYRRVDDRPFGGGPGMVMMAEPLTLCLEQIRAERTAGGVADVPTVLFSPIGEALNHAGVEAWSASSGAVLVCGRYEGLDQRFIETHIDRQISLGDFVLSGGEIAAMALLDAVARLQPGVLNDEGSHQLDSFNPALDGLLDCPHYTRPESWRGQPVPPILLSGNHAQIERWRREERLALTQRQRPELVQKARAAGHLTARDEAFLADLFENPEQDA</sequence>
<organism>
    <name type="scientific">Polaromonas sp. (strain JS666 / ATCC BAA-500)</name>
    <dbReference type="NCBI Taxonomy" id="296591"/>
    <lineage>
        <taxon>Bacteria</taxon>
        <taxon>Pseudomonadati</taxon>
        <taxon>Pseudomonadota</taxon>
        <taxon>Betaproteobacteria</taxon>
        <taxon>Burkholderiales</taxon>
        <taxon>Comamonadaceae</taxon>
        <taxon>Polaromonas</taxon>
    </lineage>
</organism>
<comment type="function">
    <text evidence="1">Specifically methylates guanosine-37 in various tRNAs.</text>
</comment>
<comment type="catalytic activity">
    <reaction evidence="1">
        <text>guanosine(37) in tRNA + S-adenosyl-L-methionine = N(1)-methylguanosine(37) in tRNA + S-adenosyl-L-homocysteine + H(+)</text>
        <dbReference type="Rhea" id="RHEA:36899"/>
        <dbReference type="Rhea" id="RHEA-COMP:10145"/>
        <dbReference type="Rhea" id="RHEA-COMP:10147"/>
        <dbReference type="ChEBI" id="CHEBI:15378"/>
        <dbReference type="ChEBI" id="CHEBI:57856"/>
        <dbReference type="ChEBI" id="CHEBI:59789"/>
        <dbReference type="ChEBI" id="CHEBI:73542"/>
        <dbReference type="ChEBI" id="CHEBI:74269"/>
        <dbReference type="EC" id="2.1.1.228"/>
    </reaction>
</comment>
<comment type="subunit">
    <text evidence="1">Homodimer.</text>
</comment>
<comment type="subcellular location">
    <subcellularLocation>
        <location evidence="1">Cytoplasm</location>
    </subcellularLocation>
</comment>
<comment type="similarity">
    <text evidence="1">Belongs to the RNA methyltransferase TrmD family.</text>
</comment>
<gene>
    <name evidence="1" type="primary">trmD</name>
    <name type="ordered locus">Bpro_1692</name>
</gene>
<dbReference type="EC" id="2.1.1.228" evidence="1"/>
<dbReference type="EMBL" id="CP000316">
    <property type="protein sequence ID" value="ABE43628.1"/>
    <property type="molecule type" value="Genomic_DNA"/>
</dbReference>
<dbReference type="RefSeq" id="WP_011482627.1">
    <property type="nucleotide sequence ID" value="NC_007948.1"/>
</dbReference>
<dbReference type="SMR" id="Q12CW4"/>
<dbReference type="STRING" id="296591.Bpro_1692"/>
<dbReference type="KEGG" id="pol:Bpro_1692"/>
<dbReference type="eggNOG" id="COG0336">
    <property type="taxonomic scope" value="Bacteria"/>
</dbReference>
<dbReference type="HOGENOM" id="CLU_047363_0_1_4"/>
<dbReference type="OrthoDB" id="9807416at2"/>
<dbReference type="Proteomes" id="UP000001983">
    <property type="component" value="Chromosome"/>
</dbReference>
<dbReference type="GO" id="GO:0005829">
    <property type="term" value="C:cytosol"/>
    <property type="evidence" value="ECO:0007669"/>
    <property type="project" value="TreeGrafter"/>
</dbReference>
<dbReference type="GO" id="GO:0052906">
    <property type="term" value="F:tRNA (guanine(37)-N1)-methyltransferase activity"/>
    <property type="evidence" value="ECO:0007669"/>
    <property type="project" value="UniProtKB-UniRule"/>
</dbReference>
<dbReference type="GO" id="GO:0002939">
    <property type="term" value="P:tRNA N1-guanine methylation"/>
    <property type="evidence" value="ECO:0007669"/>
    <property type="project" value="TreeGrafter"/>
</dbReference>
<dbReference type="CDD" id="cd18080">
    <property type="entry name" value="TrmD-like"/>
    <property type="match status" value="1"/>
</dbReference>
<dbReference type="FunFam" id="3.40.1280.10:FF:000001">
    <property type="entry name" value="tRNA (guanine-N(1)-)-methyltransferase"/>
    <property type="match status" value="1"/>
</dbReference>
<dbReference type="Gene3D" id="3.40.1280.10">
    <property type="match status" value="1"/>
</dbReference>
<dbReference type="Gene3D" id="1.10.1270.20">
    <property type="entry name" value="tRNA(m1g37)methyltransferase, domain 2"/>
    <property type="match status" value="1"/>
</dbReference>
<dbReference type="HAMAP" id="MF_00605">
    <property type="entry name" value="TrmD"/>
    <property type="match status" value="1"/>
</dbReference>
<dbReference type="InterPro" id="IPR029028">
    <property type="entry name" value="Alpha/beta_knot_MTases"/>
</dbReference>
<dbReference type="InterPro" id="IPR023148">
    <property type="entry name" value="tRNA_m1G_MeTrfase_C_sf"/>
</dbReference>
<dbReference type="InterPro" id="IPR002649">
    <property type="entry name" value="tRNA_m1G_MeTrfase_TrmD"/>
</dbReference>
<dbReference type="InterPro" id="IPR029026">
    <property type="entry name" value="tRNA_m1G_MTases_N"/>
</dbReference>
<dbReference type="InterPro" id="IPR016009">
    <property type="entry name" value="tRNA_MeTrfase_TRMD/TRM10"/>
</dbReference>
<dbReference type="NCBIfam" id="NF000648">
    <property type="entry name" value="PRK00026.1"/>
    <property type="match status" value="1"/>
</dbReference>
<dbReference type="NCBIfam" id="TIGR00088">
    <property type="entry name" value="trmD"/>
    <property type="match status" value="1"/>
</dbReference>
<dbReference type="PANTHER" id="PTHR46417">
    <property type="entry name" value="TRNA (GUANINE-N(1)-)-METHYLTRANSFERASE"/>
    <property type="match status" value="1"/>
</dbReference>
<dbReference type="PANTHER" id="PTHR46417:SF1">
    <property type="entry name" value="TRNA (GUANINE-N(1)-)-METHYLTRANSFERASE"/>
    <property type="match status" value="1"/>
</dbReference>
<dbReference type="Pfam" id="PF01746">
    <property type="entry name" value="tRNA_m1G_MT"/>
    <property type="match status" value="1"/>
</dbReference>
<dbReference type="PIRSF" id="PIRSF000386">
    <property type="entry name" value="tRNA_mtase"/>
    <property type="match status" value="1"/>
</dbReference>
<dbReference type="SUPFAM" id="SSF75217">
    <property type="entry name" value="alpha/beta knot"/>
    <property type="match status" value="1"/>
</dbReference>
<reference key="1">
    <citation type="journal article" date="2008" name="Appl. Environ. Microbiol.">
        <title>The genome of Polaromonas sp. strain JS666: insights into the evolution of a hydrocarbon- and xenobiotic-degrading bacterium, and features of relevance to biotechnology.</title>
        <authorList>
            <person name="Mattes T.E."/>
            <person name="Alexander A.K."/>
            <person name="Richardson P.M."/>
            <person name="Munk A.C."/>
            <person name="Han C.S."/>
            <person name="Stothard P."/>
            <person name="Coleman N.V."/>
        </authorList>
    </citation>
    <scope>NUCLEOTIDE SEQUENCE [LARGE SCALE GENOMIC DNA]</scope>
    <source>
        <strain>JS666 / ATCC BAA-500</strain>
    </source>
</reference>
<accession>Q12CW4</accession>
<proteinExistence type="inferred from homology"/>
<protein>
    <recommendedName>
        <fullName evidence="1">tRNA (guanine-N(1)-)-methyltransferase</fullName>
        <ecNumber evidence="1">2.1.1.228</ecNumber>
    </recommendedName>
    <alternativeName>
        <fullName evidence="1">M1G-methyltransferase</fullName>
    </alternativeName>
    <alternativeName>
        <fullName evidence="1">tRNA [GM37] methyltransferase</fullName>
    </alternativeName>
</protein>
<name>TRMD_POLSJ</name>
<feature type="chain" id="PRO_0000257446" description="tRNA (guanine-N(1)-)-methyltransferase">
    <location>
        <begin position="1"/>
        <end position="259"/>
    </location>
</feature>
<feature type="binding site" evidence="1">
    <location>
        <position position="117"/>
    </location>
    <ligand>
        <name>S-adenosyl-L-methionine</name>
        <dbReference type="ChEBI" id="CHEBI:59789"/>
    </ligand>
</feature>
<feature type="binding site" evidence="1">
    <location>
        <begin position="137"/>
        <end position="142"/>
    </location>
    <ligand>
        <name>S-adenosyl-L-methionine</name>
        <dbReference type="ChEBI" id="CHEBI:59789"/>
    </ligand>
</feature>